<name>NRDI_BART1</name>
<dbReference type="EMBL" id="AM260525">
    <property type="protein sequence ID" value="CAK00691.1"/>
    <property type="molecule type" value="Genomic_DNA"/>
</dbReference>
<dbReference type="RefSeq" id="WP_012230603.1">
    <property type="nucleotide sequence ID" value="NC_010161.1"/>
</dbReference>
<dbReference type="SMR" id="A9IML0"/>
<dbReference type="KEGG" id="btr:BT_0211"/>
<dbReference type="eggNOG" id="COG1780">
    <property type="taxonomic scope" value="Bacteria"/>
</dbReference>
<dbReference type="HOGENOM" id="CLU_114845_0_0_5"/>
<dbReference type="Proteomes" id="UP000001592">
    <property type="component" value="Chromosome"/>
</dbReference>
<dbReference type="GO" id="GO:0010181">
    <property type="term" value="F:FMN binding"/>
    <property type="evidence" value="ECO:0007669"/>
    <property type="project" value="InterPro"/>
</dbReference>
<dbReference type="GO" id="GO:0036211">
    <property type="term" value="P:protein modification process"/>
    <property type="evidence" value="ECO:0007669"/>
    <property type="project" value="InterPro"/>
</dbReference>
<dbReference type="Gene3D" id="3.40.50.360">
    <property type="match status" value="1"/>
</dbReference>
<dbReference type="HAMAP" id="MF_00128">
    <property type="entry name" value="NrdI"/>
    <property type="match status" value="1"/>
</dbReference>
<dbReference type="InterPro" id="IPR029039">
    <property type="entry name" value="Flavoprotein-like_sf"/>
</dbReference>
<dbReference type="InterPro" id="IPR020852">
    <property type="entry name" value="RNR_Ib_NrdI_bac"/>
</dbReference>
<dbReference type="InterPro" id="IPR004465">
    <property type="entry name" value="RNR_NrdI"/>
</dbReference>
<dbReference type="NCBIfam" id="TIGR00333">
    <property type="entry name" value="nrdI"/>
    <property type="match status" value="1"/>
</dbReference>
<dbReference type="PANTHER" id="PTHR37297">
    <property type="entry name" value="PROTEIN NRDI"/>
    <property type="match status" value="1"/>
</dbReference>
<dbReference type="PANTHER" id="PTHR37297:SF1">
    <property type="entry name" value="PROTEIN NRDI"/>
    <property type="match status" value="1"/>
</dbReference>
<dbReference type="Pfam" id="PF07972">
    <property type="entry name" value="Flavodoxin_NdrI"/>
    <property type="match status" value="1"/>
</dbReference>
<dbReference type="PIRSF" id="PIRSF005087">
    <property type="entry name" value="NrdI"/>
    <property type="match status" value="1"/>
</dbReference>
<dbReference type="SUPFAM" id="SSF52218">
    <property type="entry name" value="Flavoproteins"/>
    <property type="match status" value="1"/>
</dbReference>
<gene>
    <name evidence="1" type="primary">nrdI</name>
    <name type="ordered locus">BT_0211</name>
</gene>
<protein>
    <recommendedName>
        <fullName evidence="1">Protein NrdI</fullName>
    </recommendedName>
</protein>
<reference key="1">
    <citation type="journal article" date="2007" name="Nat. Genet.">
        <title>Genomic analysis of Bartonella identifies type IV secretion systems as host adaptability factors.</title>
        <authorList>
            <person name="Saenz H.L."/>
            <person name="Engel P."/>
            <person name="Stoeckli M.C."/>
            <person name="Lanz C."/>
            <person name="Raddatz G."/>
            <person name="Vayssier-Taussat M."/>
            <person name="Birtles R."/>
            <person name="Schuster S.C."/>
            <person name="Dehio C."/>
        </authorList>
    </citation>
    <scope>NUCLEOTIDE SEQUENCE [LARGE SCALE GENOMIC DNA]</scope>
    <source>
        <strain>CIP 105476 / IBS 506</strain>
    </source>
</reference>
<feature type="chain" id="PRO_1000076295" description="Protein NrdI">
    <location>
        <begin position="1"/>
        <end position="132"/>
    </location>
</feature>
<accession>A9IML0</accession>
<evidence type="ECO:0000255" key="1">
    <source>
        <dbReference type="HAMAP-Rule" id="MF_00128"/>
    </source>
</evidence>
<sequence>MGLIVYYSSATGNTEHFVSQLGQRLFKIDKRKPSAFVGEPYVLVVPTYADGEGRGAVPKAVIHFLNEAENRKLIRGVIGSGNRNFGRYYSLASKIIAEKCGVPCLYRFELRGTDEDVICVKKGLERFWKQLG</sequence>
<organism>
    <name type="scientific">Bartonella tribocorum (strain CIP 105476 / IBS 506)</name>
    <dbReference type="NCBI Taxonomy" id="382640"/>
    <lineage>
        <taxon>Bacteria</taxon>
        <taxon>Pseudomonadati</taxon>
        <taxon>Pseudomonadota</taxon>
        <taxon>Alphaproteobacteria</taxon>
        <taxon>Hyphomicrobiales</taxon>
        <taxon>Bartonellaceae</taxon>
        <taxon>Bartonella</taxon>
    </lineage>
</organism>
<comment type="function">
    <text evidence="1">Probably involved in ribonucleotide reductase function.</text>
</comment>
<comment type="similarity">
    <text evidence="1">Belongs to the NrdI family.</text>
</comment>
<proteinExistence type="inferred from homology"/>